<gene>
    <name type="ordered locus">AtMg01010</name>
</gene>
<organism>
    <name type="scientific">Arabidopsis thaliana</name>
    <name type="common">Mouse-ear cress</name>
    <dbReference type="NCBI Taxonomy" id="3702"/>
    <lineage>
        <taxon>Eukaryota</taxon>
        <taxon>Viridiplantae</taxon>
        <taxon>Streptophyta</taxon>
        <taxon>Embryophyta</taxon>
        <taxon>Tracheophyta</taxon>
        <taxon>Spermatophyta</taxon>
        <taxon>Magnoliopsida</taxon>
        <taxon>eudicotyledons</taxon>
        <taxon>Gunneridae</taxon>
        <taxon>Pentapetalae</taxon>
        <taxon>rosids</taxon>
        <taxon>malvids</taxon>
        <taxon>Brassicales</taxon>
        <taxon>Brassicaceae</taxon>
        <taxon>Camelineae</taxon>
        <taxon>Arabidopsis</taxon>
    </lineage>
</organism>
<reference key="1">
    <citation type="journal article" date="1997" name="Nat. Genet.">
        <title>The mitochondrial genome of Arabidopsis thaliana contains 57 genes in 366,924 nucleotides.</title>
        <authorList>
            <person name="Unseld M."/>
            <person name="Marienfeld J.R."/>
            <person name="Brandt P."/>
            <person name="Brennicke A."/>
        </authorList>
    </citation>
    <scope>NUCLEOTIDE SEQUENCE [LARGE SCALE GENOMIC DNA]</scope>
    <source>
        <strain>cv. C24</strain>
    </source>
</reference>
<reference key="2">
    <citation type="journal article" date="2018" name="Plant Cell">
        <title>Correction of persistent errors in Arabidopsis reference mitochondrial genomes.</title>
        <authorList>
            <person name="Sloan D.B."/>
            <person name="Wu Z."/>
            <person name="Sharbrough J."/>
        </authorList>
    </citation>
    <scope>NUCLEOTIDE SEQUENCE [LARGE SCALE GENOMIC DNA]</scope>
    <source>
        <strain>cv. Columbia</strain>
    </source>
</reference>
<reference key="3">
    <citation type="journal article" date="1999" name="Nature">
        <title>Sequence and analysis of chromosome 2 of the plant Arabidopsis thaliana.</title>
        <authorList>
            <person name="Lin X."/>
            <person name="Kaul S."/>
            <person name="Rounsley S.D."/>
            <person name="Shea T.P."/>
            <person name="Benito M.-I."/>
            <person name="Town C.D."/>
            <person name="Fujii C.Y."/>
            <person name="Mason T.M."/>
            <person name="Bowman C.L."/>
            <person name="Barnstead M.E."/>
            <person name="Feldblyum T.V."/>
            <person name="Buell C.R."/>
            <person name="Ketchum K.A."/>
            <person name="Lee J.J."/>
            <person name="Ronning C.M."/>
            <person name="Koo H.L."/>
            <person name="Moffat K.S."/>
            <person name="Cronin L.A."/>
            <person name="Shen M."/>
            <person name="Pai G."/>
            <person name="Van Aken S."/>
            <person name="Umayam L."/>
            <person name="Tallon L.J."/>
            <person name="Gill J.E."/>
            <person name="Adams M.D."/>
            <person name="Carrera A.J."/>
            <person name="Creasy T.H."/>
            <person name="Goodman H.M."/>
            <person name="Somerville C.R."/>
            <person name="Copenhaver G.P."/>
            <person name="Preuss D."/>
            <person name="Nierman W.C."/>
            <person name="White O."/>
            <person name="Eisen J.A."/>
            <person name="Salzberg S.L."/>
            <person name="Fraser C.M."/>
            <person name="Venter J.C."/>
        </authorList>
    </citation>
    <scope>NUCLEOTIDE SEQUENCE [LARGE SCALE GENOMIC DNA] (AT2G07674)</scope>
    <source>
        <strain>cv. Columbia</strain>
    </source>
</reference>
<reference key="4">
    <citation type="submission" date="2003-11" db="EMBL/GenBank/DDBJ databases">
        <title>Arabidopsis cDNA clones.</title>
        <authorList>
            <person name="Shinn P."/>
            <person name="Chen H."/>
            <person name="Cheuk R.F."/>
            <person name="Kim C.J."/>
            <person name="Ecker J.R."/>
        </authorList>
    </citation>
    <scope>NUCLEOTIDE SEQUENCE [LARGE SCALE MRNA] (AT2G07674)</scope>
    <source>
        <strain>cv. Columbia</strain>
    </source>
</reference>
<accession>P92535</accession>
<accession>Q1ZXX9</accession>
<accession>Q8S878</accession>
<accession>Q8S8C3</accession>
<feature type="chain" id="PRO_0000196805" description="Uncharacterized mitochondrial protein AtMg01010">
    <location>
        <begin position="1"/>
        <end position="118"/>
    </location>
</feature>
<dbReference type="EMBL" id="Y08501">
    <property type="protein sequence ID" value="CAA69841.1"/>
    <property type="molecule type" value="Genomic_DNA"/>
</dbReference>
<dbReference type="EMBL" id="BK010421">
    <property type="status" value="NOT_ANNOTATED_CDS"/>
    <property type="molecule type" value="Genomic_DNA"/>
</dbReference>
<dbReference type="EMBL" id="AC007143">
    <property type="protein sequence ID" value="AAM15419.1"/>
    <property type="status" value="ALT_SEQ"/>
    <property type="molecule type" value="Genomic_DNA"/>
</dbReference>
<dbReference type="EMBL" id="AC007730">
    <property type="protein sequence ID" value="AAM15514.1"/>
    <property type="status" value="ALT_SEQ"/>
    <property type="molecule type" value="Genomic_DNA"/>
</dbReference>
<dbReference type="EMBL" id="BT010728">
    <property type="protein sequence ID" value="AAR20785.1"/>
    <property type="status" value="ALT_INIT"/>
    <property type="molecule type" value="mRNA"/>
</dbReference>
<dbReference type="RefSeq" id="NP_085555.1">
    <property type="nucleotide sequence ID" value="NC_001284.2"/>
</dbReference>
<dbReference type="SMR" id="P92535"/>
<dbReference type="STRING" id="3702.P92535"/>
<dbReference type="PaxDb" id="3702-AT2G07674.1"/>
<dbReference type="EnsemblPlants" id="ATMG01010.1">
    <property type="protein sequence ID" value="ATMG01010.1"/>
    <property type="gene ID" value="ATMG01010"/>
</dbReference>
<dbReference type="Gramene" id="ATMG01010.1">
    <property type="protein sequence ID" value="ATMG01010.1"/>
    <property type="gene ID" value="ATMG01010"/>
</dbReference>
<dbReference type="Araport" id="ATMG01010"/>
<dbReference type="TAIR" id="ATMG01010">
    <property type="gene designation" value="ORF118"/>
</dbReference>
<dbReference type="eggNOG" id="ENOG502S3JA">
    <property type="taxonomic scope" value="Eukaryota"/>
</dbReference>
<dbReference type="HOGENOM" id="CLU_090131_1_0_1"/>
<dbReference type="InParanoid" id="P92535"/>
<dbReference type="PRO" id="PR:P92535"/>
<dbReference type="Proteomes" id="UP000006548">
    <property type="component" value="Mitochondrion MT"/>
</dbReference>
<dbReference type="GO" id="GO:0005739">
    <property type="term" value="C:mitochondrion"/>
    <property type="evidence" value="ECO:0007669"/>
    <property type="project" value="UniProtKB-SubCell"/>
</dbReference>
<dbReference type="InterPro" id="IPR052694">
    <property type="entry name" value="Mt_uS3-like"/>
</dbReference>
<dbReference type="PANTHER" id="PTHR35289:SF1">
    <property type="entry name" value="ATP SYNTHASE 9 MITOCHONDRIAL-RELATED"/>
    <property type="match status" value="1"/>
</dbReference>
<dbReference type="PANTHER" id="PTHR35289">
    <property type="entry name" value="TRANSMEMBRANE PROTEIN"/>
    <property type="match status" value="1"/>
</dbReference>
<comment type="subcellular location">
    <subcellularLocation>
        <location evidence="1">Mitochondrion</location>
    </subcellularLocation>
</comment>
<comment type="miscellaneous">
    <text>A stretch of 270 kb of the mitochondrial genome is duplicated within the centromere of chromosome 2 resulting in the duplication of the gene. The expression of this duplicated gene (At2g07674) is demonstrated.</text>
</comment>
<comment type="sequence caution" evidence="1">
    <conflict type="erroneous gene model prediction">
        <sequence resource="EMBL-CDS" id="AAM15419"/>
    </conflict>
</comment>
<comment type="sequence caution" evidence="1">
    <conflict type="erroneous gene model prediction">
        <sequence resource="EMBL-CDS" id="AAM15514"/>
    </conflict>
</comment>
<comment type="sequence caution" evidence="1">
    <conflict type="erroneous initiation">
        <sequence resource="EMBL-CDS" id="AAR20785"/>
    </conflict>
</comment>
<keyword id="KW-0496">Mitochondrion</keyword>
<keyword id="KW-1185">Reference proteome</keyword>
<sequence>MIGGDSVEAIERRLLAKYPEGSPSAEIIEMARIEAEDLFEIKAQIIQRMALYDPTGDWMARGARALDNPRTTSGEESLERLYDIWKDLQETGPLSDEFSRLQEKVFLKKGGPGGDPIA</sequence>
<geneLocation type="mitochondrion"/>
<proteinExistence type="predicted"/>
<name>M1010_ARATH</name>
<evidence type="ECO:0000305" key="1"/>
<protein>
    <recommendedName>
        <fullName>Uncharacterized mitochondrial protein AtMg01010</fullName>
    </recommendedName>
    <alternativeName>
        <fullName>ORF118</fullName>
    </alternativeName>
</protein>